<comment type="caution">
    <text evidence="1">Product of a dubious gene prediction unlikely to encode a functional protein. Because of that it is not part of the S.cerevisiae S288c complete/reference proteome set.</text>
</comment>
<sequence>MGQMRWNSGTTALISSTERHYLCKGCKRSISESLLIHTRDHISKFSTLGLNSSAKLCLAILGENTYLRYHIVFLLFLNSFRKFDSEQSATQIFDHGKVTAPIALRIVVACSFSSSAGCGIFECQFSTLKHQIMLVSCLNDGRIYVTLSAFLPVRFLFHCVHLLLSG</sequence>
<evidence type="ECO:0000305" key="1">
    <source>
    </source>
</evidence>
<feature type="chain" id="PRO_0000299904" description="Putative uncharacterized protein YDR535C">
    <location>
        <begin position="1"/>
        <end position="166"/>
    </location>
</feature>
<protein>
    <recommendedName>
        <fullName>Putative uncharacterized protein YDR535C</fullName>
    </recommendedName>
</protein>
<proteinExistence type="uncertain"/>
<accession>Q04434</accession>
<reference key="1">
    <citation type="journal article" date="1997" name="Nature">
        <title>The nucleotide sequence of Saccharomyces cerevisiae chromosome IV.</title>
        <authorList>
            <person name="Jacq C."/>
            <person name="Alt-Moerbe J."/>
            <person name="Andre B."/>
            <person name="Arnold W."/>
            <person name="Bahr A."/>
            <person name="Ballesta J.P.G."/>
            <person name="Bargues M."/>
            <person name="Baron L."/>
            <person name="Becker A."/>
            <person name="Biteau N."/>
            <person name="Bloecker H."/>
            <person name="Blugeon C."/>
            <person name="Boskovic J."/>
            <person name="Brandt P."/>
            <person name="Brueckner M."/>
            <person name="Buitrago M.J."/>
            <person name="Coster F."/>
            <person name="Delaveau T."/>
            <person name="del Rey F."/>
            <person name="Dujon B."/>
            <person name="Eide L.G."/>
            <person name="Garcia-Cantalejo J.M."/>
            <person name="Goffeau A."/>
            <person name="Gomez-Peris A."/>
            <person name="Granotier C."/>
            <person name="Hanemann V."/>
            <person name="Hankeln T."/>
            <person name="Hoheisel J.D."/>
            <person name="Jaeger W."/>
            <person name="Jimenez A."/>
            <person name="Jonniaux J.-L."/>
            <person name="Kraemer C."/>
            <person name="Kuester H."/>
            <person name="Laamanen P."/>
            <person name="Legros Y."/>
            <person name="Louis E.J."/>
            <person name="Moeller-Rieker S."/>
            <person name="Monnet A."/>
            <person name="Moro M."/>
            <person name="Mueller-Auer S."/>
            <person name="Nussbaumer B."/>
            <person name="Paricio N."/>
            <person name="Paulin L."/>
            <person name="Perea J."/>
            <person name="Perez-Alonso M."/>
            <person name="Perez-Ortin J.E."/>
            <person name="Pohl T.M."/>
            <person name="Prydz H."/>
            <person name="Purnelle B."/>
            <person name="Rasmussen S.W."/>
            <person name="Remacha M.A."/>
            <person name="Revuelta J.L."/>
            <person name="Rieger M."/>
            <person name="Salom D."/>
            <person name="Saluz H.P."/>
            <person name="Saiz J.E."/>
            <person name="Saren A.-M."/>
            <person name="Schaefer M."/>
            <person name="Scharfe M."/>
            <person name="Schmidt E.R."/>
            <person name="Schneider C."/>
            <person name="Scholler P."/>
            <person name="Schwarz S."/>
            <person name="Soler-Mira A."/>
            <person name="Urrestarazu L.A."/>
            <person name="Verhasselt P."/>
            <person name="Vissers S."/>
            <person name="Voet M."/>
            <person name="Volckaert G."/>
            <person name="Wagner G."/>
            <person name="Wambutt R."/>
            <person name="Wedler E."/>
            <person name="Wedler H."/>
            <person name="Woelfl S."/>
            <person name="Harris D.E."/>
            <person name="Bowman S."/>
            <person name="Brown D."/>
            <person name="Churcher C.M."/>
            <person name="Connor R."/>
            <person name="Dedman K."/>
            <person name="Gentles S."/>
            <person name="Hamlin N."/>
            <person name="Hunt S."/>
            <person name="Jones L."/>
            <person name="McDonald S."/>
            <person name="Murphy L.D."/>
            <person name="Niblett D."/>
            <person name="Odell C."/>
            <person name="Oliver K."/>
            <person name="Rajandream M.A."/>
            <person name="Richards C."/>
            <person name="Shore L."/>
            <person name="Walsh S.V."/>
            <person name="Barrell B.G."/>
            <person name="Dietrich F.S."/>
            <person name="Mulligan J.T."/>
            <person name="Allen E."/>
            <person name="Araujo R."/>
            <person name="Aviles E."/>
            <person name="Berno A."/>
            <person name="Carpenter J."/>
            <person name="Chen E."/>
            <person name="Cherry J.M."/>
            <person name="Chung E."/>
            <person name="Duncan M."/>
            <person name="Hunicke-Smith S."/>
            <person name="Hyman R.W."/>
            <person name="Komp C."/>
            <person name="Lashkari D."/>
            <person name="Lew H."/>
            <person name="Lin D."/>
            <person name="Mosedale D."/>
            <person name="Nakahara K."/>
            <person name="Namath A."/>
            <person name="Oefner P."/>
            <person name="Oh C."/>
            <person name="Petel F.X."/>
            <person name="Roberts D."/>
            <person name="Schramm S."/>
            <person name="Schroeder M."/>
            <person name="Shogren T."/>
            <person name="Shroff N."/>
            <person name="Winant A."/>
            <person name="Yelton M.A."/>
            <person name="Botstein D."/>
            <person name="Davis R.W."/>
            <person name="Johnston M."/>
            <person name="Andrews S."/>
            <person name="Brinkman R."/>
            <person name="Cooper J."/>
            <person name="Ding H."/>
            <person name="Du Z."/>
            <person name="Favello A."/>
            <person name="Fulton L."/>
            <person name="Gattung S."/>
            <person name="Greco T."/>
            <person name="Hallsworth K."/>
            <person name="Hawkins J."/>
            <person name="Hillier L.W."/>
            <person name="Jier M."/>
            <person name="Johnson D."/>
            <person name="Johnston L."/>
            <person name="Kirsten J."/>
            <person name="Kucaba T."/>
            <person name="Langston Y."/>
            <person name="Latreille P."/>
            <person name="Le T."/>
            <person name="Mardis E."/>
            <person name="Menezes S."/>
            <person name="Miller N."/>
            <person name="Nhan M."/>
            <person name="Pauley A."/>
            <person name="Peluso D."/>
            <person name="Rifkin L."/>
            <person name="Riles L."/>
            <person name="Taich A."/>
            <person name="Trevaskis E."/>
            <person name="Vignati D."/>
            <person name="Wilcox L."/>
            <person name="Wohldman P."/>
            <person name="Vaudin M."/>
            <person name="Wilson R."/>
            <person name="Waterston R."/>
            <person name="Albermann K."/>
            <person name="Hani J."/>
            <person name="Heumann K."/>
            <person name="Kleine K."/>
            <person name="Mewes H.-W."/>
            <person name="Zollner A."/>
            <person name="Zaccaria P."/>
        </authorList>
    </citation>
    <scope>NUCLEOTIDE SEQUENCE [LARGE SCALE GENOMIC DNA]</scope>
    <source>
        <strain>ATCC 204508 / S288c</strain>
    </source>
</reference>
<reference key="2">
    <citation type="journal article" date="2014" name="G3 (Bethesda)">
        <title>The reference genome sequence of Saccharomyces cerevisiae: Then and now.</title>
        <authorList>
            <person name="Engel S.R."/>
            <person name="Dietrich F.S."/>
            <person name="Fisk D.G."/>
            <person name="Binkley G."/>
            <person name="Balakrishnan R."/>
            <person name="Costanzo M.C."/>
            <person name="Dwight S.S."/>
            <person name="Hitz B.C."/>
            <person name="Karra K."/>
            <person name="Nash R.S."/>
            <person name="Weng S."/>
            <person name="Wong E.D."/>
            <person name="Lloyd P."/>
            <person name="Skrzypek M.S."/>
            <person name="Miyasato S.R."/>
            <person name="Simison M."/>
            <person name="Cherry J.M."/>
        </authorList>
    </citation>
    <scope>GENOME REANNOTATION</scope>
    <source>
        <strain>ATCC 204508 / S288c</strain>
    </source>
</reference>
<dbReference type="EMBL" id="U33057">
    <property type="protein sequence ID" value="AAB64974.1"/>
    <property type="molecule type" value="Genomic_DNA"/>
</dbReference>
<dbReference type="PIR" id="S69590">
    <property type="entry name" value="S69590"/>
</dbReference>
<dbReference type="STRING" id="4932.YDR535C"/>
<dbReference type="iPTMnet" id="Q04434"/>
<dbReference type="PaxDb" id="4932-YDR535C"/>
<dbReference type="EnsemblFungi" id="YDR535C_mRNA">
    <property type="protein sequence ID" value="YDR535C"/>
    <property type="gene ID" value="YDR535C"/>
</dbReference>
<dbReference type="AGR" id="SGD:S000002943"/>
<dbReference type="SGD" id="S000002943">
    <property type="gene designation" value="YDR535C"/>
</dbReference>
<dbReference type="HOGENOM" id="CLU_1604042_0_0_1"/>
<name>YD535_YEAST</name>
<organism>
    <name type="scientific">Saccharomyces cerevisiae (strain ATCC 204508 / S288c)</name>
    <name type="common">Baker's yeast</name>
    <dbReference type="NCBI Taxonomy" id="559292"/>
    <lineage>
        <taxon>Eukaryota</taxon>
        <taxon>Fungi</taxon>
        <taxon>Dikarya</taxon>
        <taxon>Ascomycota</taxon>
        <taxon>Saccharomycotina</taxon>
        <taxon>Saccharomycetes</taxon>
        <taxon>Saccharomycetales</taxon>
        <taxon>Saccharomycetaceae</taxon>
        <taxon>Saccharomyces</taxon>
    </lineage>
</organism>
<gene>
    <name type="ordered locus">YDR535C</name>
</gene>